<sequence length="588" mass="65880">MIQHPRIGIRPTIDGRRQGVRESLEVQTMNMAKSVADLISSTLKYPDGEPVECVISPSTIGRVPEAAASHELFKKSNVCATITVTPCWCYGSETMDMSPDIPHAIWGFNGTERPGAVYLAAVLASHAQKGIPAFGIYGRDVQEANDTDIPEDVKEKLLRYARAALATGLMRDTAYLSMGSVSMGIGGSIVNPDFFQEYLGMRNESVDMTEFTRRMDRGIYDPEEFERAMVWVKEHIKEGVDRNREDLILSKEEKEKQWEFVIKMFMIGRDLMVGNPRLAELGFEEEAVGHHALVAGFQGQRQWTDHFPNGDFMETFLNTQFDWNGIRKPFVFATENDSLNGVSMLFNYLLTNTPQIFADVRTYWSPEAVERVTGYTLEGRAAAGFLHLINSGSCTLDGTGQATRDGKPVMKPFWELDESEVQAMLENTDFPPANREYFRGGGFSTRFLTKGDMPVTMVRLNLLKGVGPVLQIAEGYTLELPEDVHHTLDNRTDSGWPTTWFAPRLTGKGAFKSVYDVMNNWGANHGAITYGHIGADLITLASMLRIPVNMHNVPEEDIFRPKNWSLFGTEDLESADYRACQLLGPLHK</sequence>
<keyword id="KW-0119">Carbohydrate metabolism</keyword>
<keyword id="KW-0963">Cytoplasm</keyword>
<keyword id="KW-0294">Fucose metabolism</keyword>
<keyword id="KW-0413">Isomerase</keyword>
<keyword id="KW-0464">Manganese</keyword>
<keyword id="KW-0479">Metal-binding</keyword>
<accession>C1CHF7</accession>
<organism>
    <name type="scientific">Streptococcus pneumoniae (strain JJA)</name>
    <dbReference type="NCBI Taxonomy" id="488222"/>
    <lineage>
        <taxon>Bacteria</taxon>
        <taxon>Bacillati</taxon>
        <taxon>Bacillota</taxon>
        <taxon>Bacilli</taxon>
        <taxon>Lactobacillales</taxon>
        <taxon>Streptococcaceae</taxon>
        <taxon>Streptococcus</taxon>
    </lineage>
</organism>
<protein>
    <recommendedName>
        <fullName evidence="1">L-fucose isomerase</fullName>
        <ecNumber evidence="1">5.3.1.25</ecNumber>
    </recommendedName>
    <alternativeName>
        <fullName evidence="1">6-deoxy-L-galactose isomerase</fullName>
    </alternativeName>
    <alternativeName>
        <fullName>FucIase</fullName>
    </alternativeName>
</protein>
<dbReference type="EC" id="5.3.1.25" evidence="1"/>
<dbReference type="EMBL" id="CP000919">
    <property type="protein sequence ID" value="ACO18169.1"/>
    <property type="molecule type" value="Genomic_DNA"/>
</dbReference>
<dbReference type="RefSeq" id="WP_000614251.1">
    <property type="nucleotide sequence ID" value="NC_012466.1"/>
</dbReference>
<dbReference type="SMR" id="C1CHF7"/>
<dbReference type="KEGG" id="sjj:SPJ_2184"/>
<dbReference type="HOGENOM" id="CLU_033326_1_0_9"/>
<dbReference type="UniPathway" id="UPA00563">
    <property type="reaction ID" value="UER00624"/>
</dbReference>
<dbReference type="Proteomes" id="UP000002206">
    <property type="component" value="Chromosome"/>
</dbReference>
<dbReference type="GO" id="GO:0005737">
    <property type="term" value="C:cytoplasm"/>
    <property type="evidence" value="ECO:0007669"/>
    <property type="project" value="UniProtKB-SubCell"/>
</dbReference>
<dbReference type="GO" id="GO:0008790">
    <property type="term" value="F:arabinose isomerase activity"/>
    <property type="evidence" value="ECO:0007669"/>
    <property type="project" value="TreeGrafter"/>
</dbReference>
<dbReference type="GO" id="GO:0008736">
    <property type="term" value="F:L-fucose isomerase activity"/>
    <property type="evidence" value="ECO:0007669"/>
    <property type="project" value="UniProtKB-UniRule"/>
</dbReference>
<dbReference type="GO" id="GO:0030145">
    <property type="term" value="F:manganese ion binding"/>
    <property type="evidence" value="ECO:0007669"/>
    <property type="project" value="UniProtKB-UniRule"/>
</dbReference>
<dbReference type="GO" id="GO:0019571">
    <property type="term" value="P:D-arabinose catabolic process"/>
    <property type="evidence" value="ECO:0007669"/>
    <property type="project" value="TreeGrafter"/>
</dbReference>
<dbReference type="GO" id="GO:0042355">
    <property type="term" value="P:L-fucose catabolic process"/>
    <property type="evidence" value="ECO:0007669"/>
    <property type="project" value="UniProtKB-UniRule"/>
</dbReference>
<dbReference type="CDD" id="cd03556">
    <property type="entry name" value="L-fucose_isomerase"/>
    <property type="match status" value="1"/>
</dbReference>
<dbReference type="FunFam" id="3.20.14.10:FF:000001">
    <property type="entry name" value="L-fucose isomerase"/>
    <property type="match status" value="1"/>
</dbReference>
<dbReference type="FunFam" id="3.40.50.1070:FF:000001">
    <property type="entry name" value="L-fucose isomerase"/>
    <property type="match status" value="1"/>
</dbReference>
<dbReference type="Gene3D" id="3.40.50.1070">
    <property type="match status" value="1"/>
</dbReference>
<dbReference type="Gene3D" id="3.40.275.10">
    <property type="entry name" value="L-fucose Isomerase, Chain A, domain 2"/>
    <property type="match status" value="1"/>
</dbReference>
<dbReference type="Gene3D" id="3.20.14.10">
    <property type="entry name" value="L-fucose/L-arabinose isomerase, C-terminal"/>
    <property type="match status" value="1"/>
</dbReference>
<dbReference type="HAMAP" id="MF_01254">
    <property type="entry name" value="Fucose_iso"/>
    <property type="match status" value="1"/>
</dbReference>
<dbReference type="InterPro" id="IPR004216">
    <property type="entry name" value="Fuc/Ara_isomerase_C"/>
</dbReference>
<dbReference type="InterPro" id="IPR038393">
    <property type="entry name" value="Fuc_iso_dom3_sf"/>
</dbReference>
<dbReference type="InterPro" id="IPR015888">
    <property type="entry name" value="Fuc_isomerase_C"/>
</dbReference>
<dbReference type="InterPro" id="IPR038391">
    <property type="entry name" value="Fucose_iso_dom1_sf"/>
</dbReference>
<dbReference type="InterPro" id="IPR012888">
    <property type="entry name" value="Fucose_iso_N1"/>
</dbReference>
<dbReference type="InterPro" id="IPR005763">
    <property type="entry name" value="Fucose_isomerase"/>
</dbReference>
<dbReference type="InterPro" id="IPR038392">
    <property type="entry name" value="Fucose_isomerase_dom2_sf"/>
</dbReference>
<dbReference type="InterPro" id="IPR009015">
    <property type="entry name" value="Fucose_isomerase_N/cen_sf"/>
</dbReference>
<dbReference type="InterPro" id="IPR012889">
    <property type="entry name" value="Fucose_isomerase_N2"/>
</dbReference>
<dbReference type="NCBIfam" id="TIGR01089">
    <property type="entry name" value="fucI"/>
    <property type="match status" value="1"/>
</dbReference>
<dbReference type="NCBIfam" id="NF008220">
    <property type="entry name" value="PRK10991.1"/>
    <property type="match status" value="1"/>
</dbReference>
<dbReference type="PANTHER" id="PTHR37840">
    <property type="entry name" value="L-FUCOSE ISOMERASE"/>
    <property type="match status" value="1"/>
</dbReference>
<dbReference type="PANTHER" id="PTHR37840:SF1">
    <property type="entry name" value="L-FUCOSE ISOMERASE"/>
    <property type="match status" value="1"/>
</dbReference>
<dbReference type="Pfam" id="PF02952">
    <property type="entry name" value="Fucose_iso_C"/>
    <property type="match status" value="1"/>
</dbReference>
<dbReference type="Pfam" id="PF07881">
    <property type="entry name" value="Fucose_iso_N1"/>
    <property type="match status" value="1"/>
</dbReference>
<dbReference type="Pfam" id="PF07882">
    <property type="entry name" value="Fucose_iso_N2"/>
    <property type="match status" value="1"/>
</dbReference>
<dbReference type="SUPFAM" id="SSF50443">
    <property type="entry name" value="FucI/AraA C-terminal domain-like"/>
    <property type="match status" value="1"/>
</dbReference>
<dbReference type="SUPFAM" id="SSF53743">
    <property type="entry name" value="FucI/AraA N-terminal and middle domains"/>
    <property type="match status" value="1"/>
</dbReference>
<name>FUCI_STRZJ</name>
<reference key="1">
    <citation type="journal article" date="2010" name="Genome Biol.">
        <title>Structure and dynamics of the pan-genome of Streptococcus pneumoniae and closely related species.</title>
        <authorList>
            <person name="Donati C."/>
            <person name="Hiller N.L."/>
            <person name="Tettelin H."/>
            <person name="Muzzi A."/>
            <person name="Croucher N.J."/>
            <person name="Angiuoli S.V."/>
            <person name="Oggioni M."/>
            <person name="Dunning Hotopp J.C."/>
            <person name="Hu F.Z."/>
            <person name="Riley D.R."/>
            <person name="Covacci A."/>
            <person name="Mitchell T.J."/>
            <person name="Bentley S.D."/>
            <person name="Kilian M."/>
            <person name="Ehrlich G.D."/>
            <person name="Rappuoli R."/>
            <person name="Moxon E.R."/>
            <person name="Masignani V."/>
        </authorList>
    </citation>
    <scope>NUCLEOTIDE SEQUENCE [LARGE SCALE GENOMIC DNA]</scope>
    <source>
        <strain>JJA</strain>
    </source>
</reference>
<feature type="chain" id="PRO_1000165099" description="L-fucose isomerase">
    <location>
        <begin position="1"/>
        <end position="588"/>
    </location>
</feature>
<feature type="active site" description="Proton acceptor" evidence="1">
    <location>
        <position position="335"/>
    </location>
</feature>
<feature type="active site" description="Proton acceptor" evidence="1">
    <location>
        <position position="359"/>
    </location>
</feature>
<feature type="binding site" evidence="1">
    <location>
        <position position="335"/>
    </location>
    <ligand>
        <name>Mn(2+)</name>
        <dbReference type="ChEBI" id="CHEBI:29035"/>
    </ligand>
</feature>
<feature type="binding site" evidence="1">
    <location>
        <position position="359"/>
    </location>
    <ligand>
        <name>Mn(2+)</name>
        <dbReference type="ChEBI" id="CHEBI:29035"/>
    </ligand>
</feature>
<feature type="binding site" evidence="1">
    <location>
        <position position="525"/>
    </location>
    <ligand>
        <name>Mn(2+)</name>
        <dbReference type="ChEBI" id="CHEBI:29035"/>
    </ligand>
</feature>
<proteinExistence type="inferred from homology"/>
<evidence type="ECO:0000255" key="1">
    <source>
        <dbReference type="HAMAP-Rule" id="MF_01254"/>
    </source>
</evidence>
<comment type="function">
    <text evidence="1">Converts the aldose L-fucose into the corresponding ketose L-fuculose.</text>
</comment>
<comment type="catalytic activity">
    <reaction evidence="1">
        <text>L-fucose = L-fuculose</text>
        <dbReference type="Rhea" id="RHEA:17233"/>
        <dbReference type="ChEBI" id="CHEBI:2181"/>
        <dbReference type="ChEBI" id="CHEBI:17617"/>
        <dbReference type="EC" id="5.3.1.25"/>
    </reaction>
</comment>
<comment type="cofactor">
    <cofactor evidence="1">
        <name>Mn(2+)</name>
        <dbReference type="ChEBI" id="CHEBI:29035"/>
    </cofactor>
</comment>
<comment type="pathway">
    <text evidence="1">Carbohydrate degradation; L-fucose degradation; L-lactaldehyde and glycerone phosphate from L-fucose: step 1/3.</text>
</comment>
<comment type="subcellular location">
    <subcellularLocation>
        <location evidence="1">Cytoplasm</location>
    </subcellularLocation>
</comment>
<comment type="similarity">
    <text evidence="1">Belongs to the L-fucose isomerase family.</text>
</comment>
<gene>
    <name evidence="1" type="primary">fucI</name>
    <name type="ordered locus">SPJ_2184</name>
</gene>